<name>RECA_BACLI</name>
<reference key="1">
    <citation type="submission" date="2002-10" db="EMBL/GenBank/DDBJ databases">
        <title>Molecular analysis of the recA genes of Bacilli.</title>
        <authorList>
            <person name="Nahrstedt H."/>
            <person name="Meinhardt F."/>
        </authorList>
    </citation>
    <scope>NUCLEOTIDE SEQUENCE [GENOMIC DNA]</scope>
    <source>
        <strain>MD1</strain>
    </source>
</reference>
<organism>
    <name type="scientific">Bacillus licheniformis</name>
    <dbReference type="NCBI Taxonomy" id="1402"/>
    <lineage>
        <taxon>Bacteria</taxon>
        <taxon>Bacillati</taxon>
        <taxon>Bacillota</taxon>
        <taxon>Bacilli</taxon>
        <taxon>Bacillales</taxon>
        <taxon>Bacillaceae</taxon>
        <taxon>Bacillus</taxon>
    </lineage>
</organism>
<accession>P62211</accession>
<evidence type="ECO:0000255" key="1">
    <source>
        <dbReference type="HAMAP-Rule" id="MF_00268"/>
    </source>
</evidence>
<evidence type="ECO:0000256" key="2">
    <source>
        <dbReference type="SAM" id="MobiDB-lite"/>
    </source>
</evidence>
<feature type="chain" id="PRO_0000122653" description="Protein RecA">
    <location>
        <begin position="1"/>
        <end position="348"/>
    </location>
</feature>
<feature type="region of interest" description="Disordered" evidence="2">
    <location>
        <begin position="328"/>
        <end position="348"/>
    </location>
</feature>
<feature type="compositionally biased region" description="Acidic residues" evidence="2">
    <location>
        <begin position="336"/>
        <end position="348"/>
    </location>
</feature>
<feature type="binding site" evidence="1">
    <location>
        <begin position="64"/>
        <end position="71"/>
    </location>
    <ligand>
        <name>ATP</name>
        <dbReference type="ChEBI" id="CHEBI:30616"/>
    </ligand>
</feature>
<dbReference type="EMBL" id="AJ511368">
    <property type="protein sequence ID" value="CAD54116.1"/>
    <property type="molecule type" value="Genomic_DNA"/>
</dbReference>
<dbReference type="RefSeq" id="WP_003181926.1">
    <property type="nucleotide sequence ID" value="NZ_BEXU01000006.1"/>
</dbReference>
<dbReference type="SMR" id="P62211"/>
<dbReference type="GeneID" id="92861490"/>
<dbReference type="PATRIC" id="fig|1402.62.peg.3486"/>
<dbReference type="OMA" id="DSKMGLH"/>
<dbReference type="GO" id="GO:0005829">
    <property type="term" value="C:cytosol"/>
    <property type="evidence" value="ECO:0007669"/>
    <property type="project" value="TreeGrafter"/>
</dbReference>
<dbReference type="GO" id="GO:0005524">
    <property type="term" value="F:ATP binding"/>
    <property type="evidence" value="ECO:0007669"/>
    <property type="project" value="UniProtKB-UniRule"/>
</dbReference>
<dbReference type="GO" id="GO:0016887">
    <property type="term" value="F:ATP hydrolysis activity"/>
    <property type="evidence" value="ECO:0007669"/>
    <property type="project" value="InterPro"/>
</dbReference>
<dbReference type="GO" id="GO:0140664">
    <property type="term" value="F:ATP-dependent DNA damage sensor activity"/>
    <property type="evidence" value="ECO:0007669"/>
    <property type="project" value="InterPro"/>
</dbReference>
<dbReference type="GO" id="GO:0003684">
    <property type="term" value="F:damaged DNA binding"/>
    <property type="evidence" value="ECO:0007669"/>
    <property type="project" value="UniProtKB-UniRule"/>
</dbReference>
<dbReference type="GO" id="GO:0003697">
    <property type="term" value="F:single-stranded DNA binding"/>
    <property type="evidence" value="ECO:0007669"/>
    <property type="project" value="UniProtKB-UniRule"/>
</dbReference>
<dbReference type="GO" id="GO:0006310">
    <property type="term" value="P:DNA recombination"/>
    <property type="evidence" value="ECO:0007669"/>
    <property type="project" value="UniProtKB-UniRule"/>
</dbReference>
<dbReference type="GO" id="GO:0006281">
    <property type="term" value="P:DNA repair"/>
    <property type="evidence" value="ECO:0007669"/>
    <property type="project" value="UniProtKB-UniRule"/>
</dbReference>
<dbReference type="GO" id="GO:0009432">
    <property type="term" value="P:SOS response"/>
    <property type="evidence" value="ECO:0007669"/>
    <property type="project" value="UniProtKB-UniRule"/>
</dbReference>
<dbReference type="CDD" id="cd00983">
    <property type="entry name" value="RecA"/>
    <property type="match status" value="1"/>
</dbReference>
<dbReference type="FunFam" id="3.40.50.300:FF:000087">
    <property type="entry name" value="Recombinase RecA"/>
    <property type="match status" value="1"/>
</dbReference>
<dbReference type="Gene3D" id="3.40.50.300">
    <property type="entry name" value="P-loop containing nucleotide triphosphate hydrolases"/>
    <property type="match status" value="1"/>
</dbReference>
<dbReference type="HAMAP" id="MF_00268">
    <property type="entry name" value="RecA"/>
    <property type="match status" value="1"/>
</dbReference>
<dbReference type="InterPro" id="IPR003593">
    <property type="entry name" value="AAA+_ATPase"/>
</dbReference>
<dbReference type="InterPro" id="IPR013765">
    <property type="entry name" value="DNA_recomb/repair_RecA"/>
</dbReference>
<dbReference type="InterPro" id="IPR020584">
    <property type="entry name" value="DNA_recomb/repair_RecA_CS"/>
</dbReference>
<dbReference type="InterPro" id="IPR027417">
    <property type="entry name" value="P-loop_NTPase"/>
</dbReference>
<dbReference type="InterPro" id="IPR049261">
    <property type="entry name" value="RecA-like_C"/>
</dbReference>
<dbReference type="InterPro" id="IPR049428">
    <property type="entry name" value="RecA-like_N"/>
</dbReference>
<dbReference type="InterPro" id="IPR020588">
    <property type="entry name" value="RecA_ATP-bd"/>
</dbReference>
<dbReference type="InterPro" id="IPR023400">
    <property type="entry name" value="RecA_C_sf"/>
</dbReference>
<dbReference type="InterPro" id="IPR020587">
    <property type="entry name" value="RecA_monomer-monomer_interface"/>
</dbReference>
<dbReference type="NCBIfam" id="TIGR02012">
    <property type="entry name" value="tigrfam_recA"/>
    <property type="match status" value="1"/>
</dbReference>
<dbReference type="PANTHER" id="PTHR45900:SF1">
    <property type="entry name" value="MITOCHONDRIAL DNA REPAIR PROTEIN RECA HOMOLOG-RELATED"/>
    <property type="match status" value="1"/>
</dbReference>
<dbReference type="PANTHER" id="PTHR45900">
    <property type="entry name" value="RECA"/>
    <property type="match status" value="1"/>
</dbReference>
<dbReference type="Pfam" id="PF00154">
    <property type="entry name" value="RecA"/>
    <property type="match status" value="1"/>
</dbReference>
<dbReference type="Pfam" id="PF21096">
    <property type="entry name" value="RecA_C"/>
    <property type="match status" value="1"/>
</dbReference>
<dbReference type="PRINTS" id="PR00142">
    <property type="entry name" value="RECA"/>
</dbReference>
<dbReference type="SMART" id="SM00382">
    <property type="entry name" value="AAA"/>
    <property type="match status" value="1"/>
</dbReference>
<dbReference type="SUPFAM" id="SSF52540">
    <property type="entry name" value="P-loop containing nucleoside triphosphate hydrolases"/>
    <property type="match status" value="1"/>
</dbReference>
<dbReference type="SUPFAM" id="SSF54752">
    <property type="entry name" value="RecA protein, C-terminal domain"/>
    <property type="match status" value="1"/>
</dbReference>
<dbReference type="PROSITE" id="PS00321">
    <property type="entry name" value="RECA_1"/>
    <property type="match status" value="1"/>
</dbReference>
<dbReference type="PROSITE" id="PS50162">
    <property type="entry name" value="RECA_2"/>
    <property type="match status" value="1"/>
</dbReference>
<dbReference type="PROSITE" id="PS50163">
    <property type="entry name" value="RECA_3"/>
    <property type="match status" value="1"/>
</dbReference>
<sequence>MSDRQAALDMALKQIEKQFGKGSIMKLGEQTETRISTVPSGSLALDAALGVGGYPRGRIIEVYGPESSGKTTVALHAIAEVQQQGGQAAFIDAEHALDPVYAQKLGVNIDELLLSQPDTGEQALEIAEALVRSGAVDIVVIDSVAALVPKAEIEGDMGDSHVGLQARLMSQALRKLSGAINKSKTIAIFINQIREKVGVMFGNPETTPGGRALKFYSSVRLEVRRAEQLKQGNDVMGNKTKIKVVKNKVAPPFRTAEVDIMYGEGISKEGEIIDLGTELDIVQKSGAWYSYQEERLGQGRENAKQFLKENKDILLMIQEQIREHYGLDTGGAAPAQEDEAQAQEELEF</sequence>
<comment type="function">
    <text evidence="1">Can catalyze the hydrolysis of ATP in the presence of single-stranded DNA, the ATP-dependent uptake of single-stranded DNA by duplex DNA, and the ATP-dependent hybridization of homologous single-stranded DNAs. It interacts with LexA causing its activation and leading to its autocatalytic cleavage.</text>
</comment>
<comment type="subcellular location">
    <subcellularLocation>
        <location evidence="1">Cytoplasm</location>
    </subcellularLocation>
</comment>
<comment type="similarity">
    <text evidence="1">Belongs to the RecA family.</text>
</comment>
<gene>
    <name evidence="1" type="primary">recA</name>
</gene>
<keyword id="KW-0067">ATP-binding</keyword>
<keyword id="KW-0963">Cytoplasm</keyword>
<keyword id="KW-0227">DNA damage</keyword>
<keyword id="KW-0233">DNA recombination</keyword>
<keyword id="KW-0234">DNA repair</keyword>
<keyword id="KW-0238">DNA-binding</keyword>
<keyword id="KW-0547">Nucleotide-binding</keyword>
<keyword id="KW-0742">SOS response</keyword>
<protein>
    <recommendedName>
        <fullName evidence="1">Protein RecA</fullName>
    </recommendedName>
    <alternativeName>
        <fullName evidence="1">Recombinase A</fullName>
    </alternativeName>
</protein>
<proteinExistence type="inferred from homology"/>